<organism>
    <name type="scientific">Mus musculus</name>
    <name type="common">Mouse</name>
    <dbReference type="NCBI Taxonomy" id="10090"/>
    <lineage>
        <taxon>Eukaryota</taxon>
        <taxon>Metazoa</taxon>
        <taxon>Chordata</taxon>
        <taxon>Craniata</taxon>
        <taxon>Vertebrata</taxon>
        <taxon>Euteleostomi</taxon>
        <taxon>Mammalia</taxon>
        <taxon>Eutheria</taxon>
        <taxon>Euarchontoglires</taxon>
        <taxon>Glires</taxon>
        <taxon>Rodentia</taxon>
        <taxon>Myomorpha</taxon>
        <taxon>Muroidea</taxon>
        <taxon>Muridae</taxon>
        <taxon>Murinae</taxon>
        <taxon>Mus</taxon>
        <taxon>Mus</taxon>
    </lineage>
</organism>
<comment type="function">
    <text evidence="2 8 9 10">Voltage-gated chloride channel involved in skeletal muscle excitability. Generates most of the plasma membrane chloride conductance in skeletal muscle fibers, stabilizes the resting membrane potential and contributes to the repolarization phase during action potential firing (By similarity) (PubMed:18008009, PubMed:21078869, PubMed:21149546). Forms a homodimeric channel where each subunit has its own ion conduction pathway. Conducts double-barreled currents controlled by two types of gates, two fast glutamate gates that control each subunit independently and a slow common gate that opens and shuts off both subunits simultaneously (By similarity). Has a significant open probability at muscle resting potential and is further activated upon membrane depolarization. Permeable to small monovalent anions with ion selectivity for chloride &gt; thiocyanate &gt; bromide &gt; nitrate &gt; iodide (By similarity).</text>
</comment>
<comment type="catalytic activity">
    <reaction evidence="2">
        <text>chloride(in) = chloride(out)</text>
        <dbReference type="Rhea" id="RHEA:29823"/>
        <dbReference type="ChEBI" id="CHEBI:17996"/>
    </reaction>
</comment>
<comment type="catalytic activity">
    <reaction evidence="2">
        <text>thiocyanate(in) = thiocyanate(out)</text>
        <dbReference type="Rhea" id="RHEA:75347"/>
        <dbReference type="ChEBI" id="CHEBI:18022"/>
    </reaction>
</comment>
<comment type="catalytic activity">
    <reaction evidence="2">
        <text>bromide(in) = bromide(out)</text>
        <dbReference type="Rhea" id="RHEA:75383"/>
        <dbReference type="ChEBI" id="CHEBI:15858"/>
    </reaction>
</comment>
<comment type="catalytic activity">
    <reaction evidence="2">
        <text>nitrate(in) = nitrate(out)</text>
        <dbReference type="Rhea" id="RHEA:34923"/>
        <dbReference type="ChEBI" id="CHEBI:17632"/>
    </reaction>
</comment>
<comment type="catalytic activity">
    <reaction evidence="2">
        <text>iodide(out) = iodide(in)</text>
        <dbReference type="Rhea" id="RHEA:66324"/>
        <dbReference type="ChEBI" id="CHEBI:16382"/>
    </reaction>
</comment>
<comment type="activity regulation">
    <text evidence="2">Modulated by membrane voltage with depolarization favouring channel opening and hyperpolarization favouring channel closure. Inhibited by acidic pH and ATP binding due to a shift of voltage dependence of common gating to more positive voltages. Inhibited by 9-anthracene-carboxylic.</text>
</comment>
<comment type="subunit">
    <text evidence="2">Homodimer.</text>
</comment>
<comment type="subcellular location">
    <subcellularLocation>
        <location evidence="2">Cell membrane</location>
        <topology evidence="2">Multi-pass membrane protein</topology>
    </subcellularLocation>
    <subcellularLocation>
        <location evidence="8 9 13">Cell membrane</location>
        <location evidence="8 9 13">Sarcolemma</location>
        <topology evidence="4">Multi-pass membrane protein</topology>
    </subcellularLocation>
    <subcellularLocation>
        <location evidence="13">Cell membrane</location>
        <location evidence="13">Sarcolemma</location>
        <location evidence="13">T-tubule</location>
        <topology evidence="4">Multi-pass membrane protein</topology>
    </subcellularLocation>
</comment>
<comment type="tissue specificity">
    <text evidence="7">Predominantly expressed in skeletal muscles.</text>
</comment>
<comment type="miscellaneous">
    <text evidence="2">Each monomer is composed of 18 alpha helices arranged in an internal pseudo-symmetry with an inverted membrane orientation. Most helices do not traverse the membrane completely.</text>
</comment>
<comment type="similarity">
    <text evidence="12">Belongs to the chloride channel (TC 2.A.49) family. ClC-1/CLCN1 subfamily.</text>
</comment>
<keyword id="KW-0129">CBS domain</keyword>
<keyword id="KW-1003">Cell membrane</keyword>
<keyword id="KW-0868">Chloride</keyword>
<keyword id="KW-0869">Chloride channel</keyword>
<keyword id="KW-0407">Ion channel</keyword>
<keyword id="KW-0406">Ion transport</keyword>
<keyword id="KW-0472">Membrane</keyword>
<keyword id="KW-0597">Phosphoprotein</keyword>
<keyword id="KW-1185">Reference proteome</keyword>
<keyword id="KW-0677">Repeat</keyword>
<keyword id="KW-0812">Transmembrane</keyword>
<keyword id="KW-1133">Transmembrane helix</keyword>
<keyword id="KW-0813">Transport</keyword>
<keyword id="KW-0851">Voltage-gated channel</keyword>
<reference key="1">
    <citation type="journal article" date="1997" name="Mamm. Genome">
        <title>The mouse Clc1/myotonia gene: ETn insertion, a variable AATC repeat, and PCR diagnosis of alleles.</title>
        <authorList>
            <person name="Schnuelle V."/>
            <person name="Antropova O."/>
            <person name="Gronemeier M."/>
            <person name="Wedemeyer N."/>
            <person name="Jockusch H."/>
            <person name="Bartsch J.W."/>
        </authorList>
    </citation>
    <scope>NUCLEOTIDE SEQUENCE [GENOMIC DNA]</scope>
    <source>
        <strain>C57BL/6J</strain>
    </source>
</reference>
<reference key="2">
    <citation type="journal article" date="2005" name="Science">
        <title>The transcriptional landscape of the mammalian genome.</title>
        <authorList>
            <person name="Carninci P."/>
            <person name="Kasukawa T."/>
            <person name="Katayama S."/>
            <person name="Gough J."/>
            <person name="Frith M.C."/>
            <person name="Maeda N."/>
            <person name="Oyama R."/>
            <person name="Ravasi T."/>
            <person name="Lenhard B."/>
            <person name="Wells C."/>
            <person name="Kodzius R."/>
            <person name="Shimokawa K."/>
            <person name="Bajic V.B."/>
            <person name="Brenner S.E."/>
            <person name="Batalov S."/>
            <person name="Forrest A.R."/>
            <person name="Zavolan M."/>
            <person name="Davis M.J."/>
            <person name="Wilming L.G."/>
            <person name="Aidinis V."/>
            <person name="Allen J.E."/>
            <person name="Ambesi-Impiombato A."/>
            <person name="Apweiler R."/>
            <person name="Aturaliya R.N."/>
            <person name="Bailey T.L."/>
            <person name="Bansal M."/>
            <person name="Baxter L."/>
            <person name="Beisel K.W."/>
            <person name="Bersano T."/>
            <person name="Bono H."/>
            <person name="Chalk A.M."/>
            <person name="Chiu K.P."/>
            <person name="Choudhary V."/>
            <person name="Christoffels A."/>
            <person name="Clutterbuck D.R."/>
            <person name="Crowe M.L."/>
            <person name="Dalla E."/>
            <person name="Dalrymple B.P."/>
            <person name="de Bono B."/>
            <person name="Della Gatta G."/>
            <person name="di Bernardo D."/>
            <person name="Down T."/>
            <person name="Engstrom P."/>
            <person name="Fagiolini M."/>
            <person name="Faulkner G."/>
            <person name="Fletcher C.F."/>
            <person name="Fukushima T."/>
            <person name="Furuno M."/>
            <person name="Futaki S."/>
            <person name="Gariboldi M."/>
            <person name="Georgii-Hemming P."/>
            <person name="Gingeras T.R."/>
            <person name="Gojobori T."/>
            <person name="Green R.E."/>
            <person name="Gustincich S."/>
            <person name="Harbers M."/>
            <person name="Hayashi Y."/>
            <person name="Hensch T.K."/>
            <person name="Hirokawa N."/>
            <person name="Hill D."/>
            <person name="Huminiecki L."/>
            <person name="Iacono M."/>
            <person name="Ikeo K."/>
            <person name="Iwama A."/>
            <person name="Ishikawa T."/>
            <person name="Jakt M."/>
            <person name="Kanapin A."/>
            <person name="Katoh M."/>
            <person name="Kawasawa Y."/>
            <person name="Kelso J."/>
            <person name="Kitamura H."/>
            <person name="Kitano H."/>
            <person name="Kollias G."/>
            <person name="Krishnan S.P."/>
            <person name="Kruger A."/>
            <person name="Kummerfeld S.K."/>
            <person name="Kurochkin I.V."/>
            <person name="Lareau L.F."/>
            <person name="Lazarevic D."/>
            <person name="Lipovich L."/>
            <person name="Liu J."/>
            <person name="Liuni S."/>
            <person name="McWilliam S."/>
            <person name="Madan Babu M."/>
            <person name="Madera M."/>
            <person name="Marchionni L."/>
            <person name="Matsuda H."/>
            <person name="Matsuzawa S."/>
            <person name="Miki H."/>
            <person name="Mignone F."/>
            <person name="Miyake S."/>
            <person name="Morris K."/>
            <person name="Mottagui-Tabar S."/>
            <person name="Mulder N."/>
            <person name="Nakano N."/>
            <person name="Nakauchi H."/>
            <person name="Ng P."/>
            <person name="Nilsson R."/>
            <person name="Nishiguchi S."/>
            <person name="Nishikawa S."/>
            <person name="Nori F."/>
            <person name="Ohara O."/>
            <person name="Okazaki Y."/>
            <person name="Orlando V."/>
            <person name="Pang K.C."/>
            <person name="Pavan W.J."/>
            <person name="Pavesi G."/>
            <person name="Pesole G."/>
            <person name="Petrovsky N."/>
            <person name="Piazza S."/>
            <person name="Reed J."/>
            <person name="Reid J.F."/>
            <person name="Ring B.Z."/>
            <person name="Ringwald M."/>
            <person name="Rost B."/>
            <person name="Ruan Y."/>
            <person name="Salzberg S.L."/>
            <person name="Sandelin A."/>
            <person name="Schneider C."/>
            <person name="Schoenbach C."/>
            <person name="Sekiguchi K."/>
            <person name="Semple C.A."/>
            <person name="Seno S."/>
            <person name="Sessa L."/>
            <person name="Sheng Y."/>
            <person name="Shibata Y."/>
            <person name="Shimada H."/>
            <person name="Shimada K."/>
            <person name="Silva D."/>
            <person name="Sinclair B."/>
            <person name="Sperling S."/>
            <person name="Stupka E."/>
            <person name="Sugiura K."/>
            <person name="Sultana R."/>
            <person name="Takenaka Y."/>
            <person name="Taki K."/>
            <person name="Tammoja K."/>
            <person name="Tan S.L."/>
            <person name="Tang S."/>
            <person name="Taylor M.S."/>
            <person name="Tegner J."/>
            <person name="Teichmann S.A."/>
            <person name="Ueda H.R."/>
            <person name="van Nimwegen E."/>
            <person name="Verardo R."/>
            <person name="Wei C.L."/>
            <person name="Yagi K."/>
            <person name="Yamanishi H."/>
            <person name="Zabarovsky E."/>
            <person name="Zhu S."/>
            <person name="Zimmer A."/>
            <person name="Hide W."/>
            <person name="Bult C."/>
            <person name="Grimmond S.M."/>
            <person name="Teasdale R.D."/>
            <person name="Liu E.T."/>
            <person name="Brusic V."/>
            <person name="Quackenbush J."/>
            <person name="Wahlestedt C."/>
            <person name="Mattick J.S."/>
            <person name="Hume D.A."/>
            <person name="Kai C."/>
            <person name="Sasaki D."/>
            <person name="Tomaru Y."/>
            <person name="Fukuda S."/>
            <person name="Kanamori-Katayama M."/>
            <person name="Suzuki M."/>
            <person name="Aoki J."/>
            <person name="Arakawa T."/>
            <person name="Iida J."/>
            <person name="Imamura K."/>
            <person name="Itoh M."/>
            <person name="Kato T."/>
            <person name="Kawaji H."/>
            <person name="Kawagashira N."/>
            <person name="Kawashima T."/>
            <person name="Kojima M."/>
            <person name="Kondo S."/>
            <person name="Konno H."/>
            <person name="Nakano K."/>
            <person name="Ninomiya N."/>
            <person name="Nishio T."/>
            <person name="Okada M."/>
            <person name="Plessy C."/>
            <person name="Shibata K."/>
            <person name="Shiraki T."/>
            <person name="Suzuki S."/>
            <person name="Tagami M."/>
            <person name="Waki K."/>
            <person name="Watahiki A."/>
            <person name="Okamura-Oho Y."/>
            <person name="Suzuki H."/>
            <person name="Kawai J."/>
            <person name="Hayashizaki Y."/>
        </authorList>
    </citation>
    <scope>NUCLEOTIDE SEQUENCE [LARGE SCALE MRNA]</scope>
    <source>
        <strain>C57BL/6J</strain>
        <tissue>Bone</tissue>
    </source>
</reference>
<reference key="3">
    <citation type="submission" date="2005-09" db="EMBL/GenBank/DDBJ databases">
        <authorList>
            <person name="Mural R.J."/>
            <person name="Adams M.D."/>
            <person name="Myers E.W."/>
            <person name="Smith H.O."/>
            <person name="Venter J.C."/>
        </authorList>
    </citation>
    <scope>NUCLEOTIDE SEQUENCE [LARGE SCALE GENOMIC DNA]</scope>
</reference>
<reference key="4">
    <citation type="journal article" date="2004" name="Genome Res.">
        <title>The status, quality, and expansion of the NIH full-length cDNA project: the Mammalian Gene Collection (MGC).</title>
        <authorList>
            <consortium name="The MGC Project Team"/>
        </authorList>
    </citation>
    <scope>NUCLEOTIDE SEQUENCE [LARGE SCALE MRNA]</scope>
</reference>
<reference key="5">
    <citation type="journal article" date="1991" name="Nature">
        <title>Inactivation of muscle chloride channel by transposon insertion in myotonic mice.</title>
        <authorList>
            <person name="Steinmeyer K."/>
            <person name="Klocke R."/>
            <person name="Ortland C."/>
            <person name="Gronemeier M."/>
            <person name="Jockusch H."/>
            <person name="Gruender S."/>
            <person name="Jentsch T.J."/>
        </authorList>
    </citation>
    <scope>NUCLEOTIDE SEQUENCE [MRNA] OF 350-467</scope>
    <scope>TISSUE SPECIFICITY</scope>
</reference>
<reference key="6">
    <citation type="journal article" date="1994" name="J. Biol. Chem.">
        <title>Nonsense and missense mutations in the muscular chloride channel gene Clc-1 of myotonic mice.</title>
        <authorList>
            <person name="Gronemeier M."/>
            <person name="Condie A."/>
            <person name="Prosser J."/>
            <person name="Steinmeyer K."/>
            <person name="Jentsch T.J."/>
            <person name="Jockusch H."/>
        </authorList>
    </citation>
    <scope>NUCLEOTIDE SEQUENCE [MRNA] OF 543-563; 740-760 AND 941-961</scope>
    <scope>MUTAGENESIS OF ILE-553</scope>
    <source>
        <strain>C57BL/6 X CBA/CaJ</strain>
        <strain>SWR/J</strain>
    </source>
</reference>
<reference key="7">
    <citation type="journal article" date="2007" name="J. Clin. Invest.">
        <title>Correction of ClC-1 splicing eliminates chloride channelopathy and myotonia in mouse models of myotonic dystrophy.</title>
        <authorList>
            <person name="Wheeler T.M."/>
            <person name="Lueck J.D."/>
            <person name="Swanson M.S."/>
            <person name="Dirksen R.T."/>
            <person name="Thornton C.A."/>
        </authorList>
    </citation>
    <scope>FUNCTION</scope>
    <scope>SUBCELLULAR LOCATION</scope>
</reference>
<reference key="8">
    <citation type="journal article" date="2010" name="J. Gen. Physiol.">
        <title>Sarcolemmal-restricted localization of functional ClC-1 channels in mouse skeletal muscle.</title>
        <authorList>
            <person name="Lueck J.D."/>
            <person name="Rossi A.E."/>
            <person name="Thornton C.A."/>
            <person name="Campbell K.P."/>
            <person name="Dirksen R.T."/>
        </authorList>
    </citation>
    <scope>FUNCTION</scope>
    <scope>SUBCELLULAR LOCATION</scope>
</reference>
<reference key="9">
    <citation type="journal article" date="2011" name="J. Gen. Physiol.">
        <title>Chloride currents from the transverse tubular system in adult mammalian skeletal muscle fibers.</title>
        <authorList>
            <person name="DiFranco M."/>
            <person name="Herrera A."/>
            <person name="Vergara J.L."/>
        </authorList>
    </citation>
    <scope>FUNCTION</scope>
    <scope>SUBCELLULAR LOCATION</scope>
</reference>
<reference key="10">
    <citation type="journal article" date="2010" name="Cell">
        <title>A tissue-specific atlas of mouse protein phosphorylation and expression.</title>
        <authorList>
            <person name="Huttlin E.L."/>
            <person name="Jedrychowski M.P."/>
            <person name="Elias J.E."/>
            <person name="Goswami T."/>
            <person name="Rad R."/>
            <person name="Beausoleil S.A."/>
            <person name="Villen J."/>
            <person name="Haas W."/>
            <person name="Sowa M.E."/>
            <person name="Gygi S.P."/>
        </authorList>
    </citation>
    <scope>PHOSPHORYLATION [LARGE SCALE ANALYSIS] AT SER-892</scope>
    <scope>IDENTIFICATION BY MASS SPECTROMETRY [LARGE SCALE ANALYSIS]</scope>
    <source>
        <tissue>Brown adipose tissue</tissue>
    </source>
</reference>
<name>CLCN1_MOUSE</name>
<gene>
    <name type="primary">Clcn1</name>
    <name type="synonym">Clc1</name>
</gene>
<sequence>MERSQSQRHGGEQSWWGSAPQYQYMPFEHCTSYGLPSENGGLQHRPRKDMGPRHNAHPTQIYGHQKEQYSYKAQDGGMPKKMGSSSTMDSLDEDHYSKCQDCVHRLGRVLRRKLGEDWIFLVLLGLLMALVSWCMDYVSAKSLQAYKWTYAQMKPSLPLQYLAWVTFPLILILFSALFCQLISPQAVGSGIPEMKTILRGVVLKEYLTLKAFVAKVVALTAGLGSGIPVGKEGPFVHIASICAAVLSKFMSMFSGVYEQPYYYTDILTVGCAVGVGCCFGTPLGGVLFSIEVTSTYFAVRNYWRGFFAATFSAFVFRVLAVWNKDAVTITALFRTNFRMDFPFDLKELPAFAVIGICCGFLGAVFVYLHRQVMLGVRKHKCLSQFLAKHRLLYPGIVTFVIASLTFPPGMGQFMAGELMPREAISTLFDNNTWVKHIGDPQSLGQSAVWLHPQVNVIIIILLFFVMKFWMSIVATTMPIPCGGFMPVFVLGAAFGRLVGEIMAMLFPEGILFDDIIYKILPGGYAVIGAAALTGAVSHTVSTAVICFELTGQIAHILPMMVAVILANMVAQSLQPSLYDSIIQVKKLPYLPDLGWNQLSKFTIFVEDIMVRDVKFVSASCTYGELRNLLQATTVKTLPLVDSKDSMILLGSVERSELQSLLQRHLCAERRLKAAQDMARKLSELPYNGKAQLAGDWHPGGRPESFAFVDEDEDEDLSRKMELPLTPAPPPPSPPPPPSQFPIAPSNPEEPNGPLPSHKQPPEASDSADQRSSTFQRLLHCLLGKAHSKKKKITQDSTDLVDNMSPEEIEAWEREQLSQPVCFDCCCIDQSPFQLVEQTTLHKTHTLFSLLGLHLAYVTSMGKLRGVLALEELQKAIEGHTKSGVQLRPPLASFRNTTSIRKTPGGPPPPAEGWNVPEDGDGAPGREVMVPTMPETPVPPPSPEAPSCLAPARAEGELEELEMVGSLEPEEELADILHGPSLRSTDEEDEDELIL</sequence>
<proteinExistence type="evidence at protein level"/>
<accession>Q64347</accession>
<accession>Q8BZ41</accession>
<accession>Q9QVY5</accession>
<protein>
    <recommendedName>
        <fullName>Chloride channel protein 1</fullName>
        <shortName>ClC-1</shortName>
    </recommendedName>
    <alternativeName>
        <fullName>Chloride channel protein, skeletal muscle</fullName>
    </alternativeName>
</protein>
<evidence type="ECO:0000250" key="1"/>
<evidence type="ECO:0000250" key="2">
    <source>
        <dbReference type="UniProtKB" id="P35523"/>
    </source>
</evidence>
<evidence type="ECO:0000250" key="3">
    <source>
        <dbReference type="UniProtKB" id="P37019"/>
    </source>
</evidence>
<evidence type="ECO:0000255" key="4"/>
<evidence type="ECO:0000255" key="5">
    <source>
        <dbReference type="PROSITE-ProRule" id="PRU00703"/>
    </source>
</evidence>
<evidence type="ECO:0000256" key="6">
    <source>
        <dbReference type="SAM" id="MobiDB-lite"/>
    </source>
</evidence>
<evidence type="ECO:0000269" key="7">
    <source>
    </source>
</evidence>
<evidence type="ECO:0000269" key="8">
    <source>
    </source>
</evidence>
<evidence type="ECO:0000269" key="9">
    <source>
    </source>
</evidence>
<evidence type="ECO:0000269" key="10">
    <source>
    </source>
</evidence>
<evidence type="ECO:0000269" key="11">
    <source>
    </source>
</evidence>
<evidence type="ECO:0000305" key="12"/>
<evidence type="ECO:0000305" key="13">
    <source>
    </source>
</evidence>
<evidence type="ECO:0007744" key="14">
    <source>
    </source>
</evidence>
<dbReference type="EMBL" id="Z95127">
    <property type="protein sequence ID" value="CAB08359.1"/>
    <property type="molecule type" value="Genomic_DNA"/>
</dbReference>
<dbReference type="EMBL" id="Z95128">
    <property type="protein sequence ID" value="CAB08359.1"/>
    <property type="status" value="JOINED"/>
    <property type="molecule type" value="Genomic_DNA"/>
</dbReference>
<dbReference type="EMBL" id="Z95129">
    <property type="protein sequence ID" value="CAB08359.1"/>
    <property type="status" value="JOINED"/>
    <property type="molecule type" value="Genomic_DNA"/>
</dbReference>
<dbReference type="EMBL" id="Z95130">
    <property type="protein sequence ID" value="CAB08359.1"/>
    <property type="status" value="JOINED"/>
    <property type="molecule type" value="Genomic_DNA"/>
</dbReference>
<dbReference type="EMBL" id="Z95131">
    <property type="protein sequence ID" value="CAB08359.1"/>
    <property type="status" value="JOINED"/>
    <property type="molecule type" value="Genomic_DNA"/>
</dbReference>
<dbReference type="EMBL" id="Z95132">
    <property type="protein sequence ID" value="CAB08359.1"/>
    <property type="status" value="JOINED"/>
    <property type="molecule type" value="Genomic_DNA"/>
</dbReference>
<dbReference type="EMBL" id="Z95133">
    <property type="protein sequence ID" value="CAB08359.1"/>
    <property type="status" value="JOINED"/>
    <property type="molecule type" value="Genomic_DNA"/>
</dbReference>
<dbReference type="EMBL" id="Z95134">
    <property type="protein sequence ID" value="CAB08359.1"/>
    <property type="status" value="JOINED"/>
    <property type="molecule type" value="Genomic_DNA"/>
</dbReference>
<dbReference type="EMBL" id="Z95135">
    <property type="protein sequence ID" value="CAB08359.1"/>
    <property type="status" value="JOINED"/>
    <property type="molecule type" value="Genomic_DNA"/>
</dbReference>
<dbReference type="EMBL" id="Z95136">
    <property type="protein sequence ID" value="CAB08359.1"/>
    <property type="status" value="JOINED"/>
    <property type="molecule type" value="Genomic_DNA"/>
</dbReference>
<dbReference type="EMBL" id="Z95137">
    <property type="protein sequence ID" value="CAB08359.1"/>
    <property type="status" value="JOINED"/>
    <property type="molecule type" value="Genomic_DNA"/>
</dbReference>
<dbReference type="EMBL" id="Z95138">
    <property type="protein sequence ID" value="CAB08359.1"/>
    <property type="status" value="JOINED"/>
    <property type="molecule type" value="Genomic_DNA"/>
</dbReference>
<dbReference type="EMBL" id="Z95139">
    <property type="protein sequence ID" value="CAB08359.1"/>
    <property type="status" value="JOINED"/>
    <property type="molecule type" value="Genomic_DNA"/>
</dbReference>
<dbReference type="EMBL" id="Z95140">
    <property type="protein sequence ID" value="CAB08359.1"/>
    <property type="status" value="JOINED"/>
    <property type="molecule type" value="Genomic_DNA"/>
</dbReference>
<dbReference type="EMBL" id="Z95141">
    <property type="protein sequence ID" value="CAB08359.1"/>
    <property type="status" value="JOINED"/>
    <property type="molecule type" value="Genomic_DNA"/>
</dbReference>
<dbReference type="EMBL" id="Z95142">
    <property type="protein sequence ID" value="CAB08359.1"/>
    <property type="status" value="JOINED"/>
    <property type="molecule type" value="Genomic_DNA"/>
</dbReference>
<dbReference type="EMBL" id="Z95143">
    <property type="protein sequence ID" value="CAB08359.1"/>
    <property type="status" value="JOINED"/>
    <property type="molecule type" value="Genomic_DNA"/>
</dbReference>
<dbReference type="EMBL" id="Z95144">
    <property type="protein sequence ID" value="CAB08359.1"/>
    <property type="status" value="JOINED"/>
    <property type="molecule type" value="Genomic_DNA"/>
</dbReference>
<dbReference type="EMBL" id="Z95145">
    <property type="protein sequence ID" value="CAB08359.1"/>
    <property type="status" value="JOINED"/>
    <property type="molecule type" value="Genomic_DNA"/>
</dbReference>
<dbReference type="EMBL" id="Z95146">
    <property type="protein sequence ID" value="CAB08359.1"/>
    <property type="status" value="JOINED"/>
    <property type="molecule type" value="Genomic_DNA"/>
</dbReference>
<dbReference type="EMBL" id="Z95147">
    <property type="protein sequence ID" value="CAB08359.1"/>
    <property type="status" value="JOINED"/>
    <property type="molecule type" value="Genomic_DNA"/>
</dbReference>
<dbReference type="EMBL" id="Z95148">
    <property type="protein sequence ID" value="CAB08359.1"/>
    <property type="status" value="JOINED"/>
    <property type="molecule type" value="Genomic_DNA"/>
</dbReference>
<dbReference type="EMBL" id="Z95149">
    <property type="protein sequence ID" value="CAB08359.1"/>
    <property type="status" value="JOINED"/>
    <property type="molecule type" value="Genomic_DNA"/>
</dbReference>
<dbReference type="EMBL" id="AK036735">
    <property type="protein sequence ID" value="BAC29557.1"/>
    <property type="molecule type" value="mRNA"/>
</dbReference>
<dbReference type="EMBL" id="CH466533">
    <property type="protein sequence ID" value="EDL13488.1"/>
    <property type="molecule type" value="Genomic_DNA"/>
</dbReference>
<dbReference type="EMBL" id="BC114336">
    <property type="protein sequence ID" value="AAI14337.1"/>
    <property type="molecule type" value="mRNA"/>
</dbReference>
<dbReference type="EMBL" id="X62895">
    <property type="protein sequence ID" value="CAA44684.1"/>
    <property type="molecule type" value="mRNA"/>
</dbReference>
<dbReference type="EMBL" id="X62896">
    <property type="protein sequence ID" value="CAA44685.1"/>
    <property type="molecule type" value="mRNA"/>
</dbReference>
<dbReference type="EMBL" id="X62897">
    <property type="protein sequence ID" value="CAA44686.1"/>
    <property type="molecule type" value="mRNA"/>
</dbReference>
<dbReference type="CCDS" id="CCDS39471.1"/>
<dbReference type="PIR" id="I48773">
    <property type="entry name" value="I48773"/>
</dbReference>
<dbReference type="RefSeq" id="NP_038519.1">
    <property type="nucleotide sequence ID" value="NM_013491.4"/>
</dbReference>
<dbReference type="SMR" id="Q64347"/>
<dbReference type="FunCoup" id="Q64347">
    <property type="interactions" value="141"/>
</dbReference>
<dbReference type="STRING" id="10090.ENSMUSP00000031894"/>
<dbReference type="iPTMnet" id="Q64347"/>
<dbReference type="PhosphoSitePlus" id="Q64347"/>
<dbReference type="PaxDb" id="10090-ENSMUSP00000031894"/>
<dbReference type="ProteomicsDB" id="285478"/>
<dbReference type="Antibodypedia" id="32627">
    <property type="antibodies" value="150 antibodies from 23 providers"/>
</dbReference>
<dbReference type="DNASU" id="12723"/>
<dbReference type="Ensembl" id="ENSMUST00000031894.13">
    <property type="protein sequence ID" value="ENSMUSP00000031894.7"/>
    <property type="gene ID" value="ENSMUSG00000029862.17"/>
</dbReference>
<dbReference type="GeneID" id="12723"/>
<dbReference type="KEGG" id="mmu:12723"/>
<dbReference type="UCSC" id="uc009bqs.1">
    <property type="organism name" value="mouse"/>
</dbReference>
<dbReference type="AGR" id="MGI:88417"/>
<dbReference type="CTD" id="1180"/>
<dbReference type="MGI" id="MGI:88417">
    <property type="gene designation" value="Clcn1"/>
</dbReference>
<dbReference type="VEuPathDB" id="HostDB:ENSMUSG00000029862"/>
<dbReference type="eggNOG" id="KOG0476">
    <property type="taxonomic scope" value="Eukaryota"/>
</dbReference>
<dbReference type="GeneTree" id="ENSGT00940000157383"/>
<dbReference type="HOGENOM" id="CLU_006904_0_1_1"/>
<dbReference type="InParanoid" id="Q64347"/>
<dbReference type="OMA" id="KHIGDPE"/>
<dbReference type="OrthoDB" id="4564at2759"/>
<dbReference type="PhylomeDB" id="Q64347"/>
<dbReference type="TreeFam" id="TF352264"/>
<dbReference type="Reactome" id="R-MMU-2672351">
    <property type="pathway name" value="Stimuli-sensing channels"/>
</dbReference>
<dbReference type="BioGRID-ORCS" id="12723">
    <property type="hits" value="5 hits in 77 CRISPR screens"/>
</dbReference>
<dbReference type="PRO" id="PR:Q64347"/>
<dbReference type="Proteomes" id="UP000000589">
    <property type="component" value="Chromosome 6"/>
</dbReference>
<dbReference type="RNAct" id="Q64347">
    <property type="molecule type" value="protein"/>
</dbReference>
<dbReference type="Bgee" id="ENSMUSG00000029862">
    <property type="expression patterns" value="Expressed in hindlimb stylopod muscle and 89 other cell types or tissues"/>
</dbReference>
<dbReference type="ExpressionAtlas" id="Q64347">
    <property type="expression patterns" value="baseline and differential"/>
</dbReference>
<dbReference type="GO" id="GO:0034707">
    <property type="term" value="C:chloride channel complex"/>
    <property type="evidence" value="ECO:0007669"/>
    <property type="project" value="UniProtKB-KW"/>
</dbReference>
<dbReference type="GO" id="GO:0005886">
    <property type="term" value="C:plasma membrane"/>
    <property type="evidence" value="ECO:0000250"/>
    <property type="project" value="UniProtKB"/>
</dbReference>
<dbReference type="GO" id="GO:0042383">
    <property type="term" value="C:sarcolemma"/>
    <property type="evidence" value="ECO:0000314"/>
    <property type="project" value="UniProtKB"/>
</dbReference>
<dbReference type="GO" id="GO:0030315">
    <property type="term" value="C:T-tubule"/>
    <property type="evidence" value="ECO:0007669"/>
    <property type="project" value="UniProtKB-SubCell"/>
</dbReference>
<dbReference type="GO" id="GO:0042803">
    <property type="term" value="F:protein homodimerization activity"/>
    <property type="evidence" value="ECO:0000250"/>
    <property type="project" value="UniProtKB"/>
</dbReference>
<dbReference type="GO" id="GO:0005247">
    <property type="term" value="F:voltage-gated chloride channel activity"/>
    <property type="evidence" value="ECO:0000250"/>
    <property type="project" value="UniProtKB"/>
</dbReference>
<dbReference type="GO" id="GO:1902476">
    <property type="term" value="P:chloride transmembrane transport"/>
    <property type="evidence" value="ECO:0000250"/>
    <property type="project" value="UniProtKB"/>
</dbReference>
<dbReference type="GO" id="GO:0006821">
    <property type="term" value="P:chloride transport"/>
    <property type="evidence" value="ECO:0000315"/>
    <property type="project" value="MGI"/>
</dbReference>
<dbReference type="GO" id="GO:0006936">
    <property type="term" value="P:muscle contraction"/>
    <property type="evidence" value="ECO:0000250"/>
    <property type="project" value="UniProtKB"/>
</dbReference>
<dbReference type="GO" id="GO:0019227">
    <property type="term" value="P:neuronal action potential propagation"/>
    <property type="evidence" value="ECO:0000315"/>
    <property type="project" value="MGI"/>
</dbReference>
<dbReference type="CDD" id="cd03683">
    <property type="entry name" value="ClC_1_like"/>
    <property type="match status" value="1"/>
</dbReference>
<dbReference type="FunFam" id="1.10.3080.10:FF:000003">
    <property type="entry name" value="Chloride channel 2"/>
    <property type="match status" value="1"/>
</dbReference>
<dbReference type="FunFam" id="3.10.580.10:FF:000027">
    <property type="entry name" value="Chloride channel protein"/>
    <property type="match status" value="1"/>
</dbReference>
<dbReference type="FunFam" id="3.10.580.10:FF:000030">
    <property type="entry name" value="Chloride channel protein"/>
    <property type="match status" value="1"/>
</dbReference>
<dbReference type="Gene3D" id="3.10.580.10">
    <property type="entry name" value="CBS-domain"/>
    <property type="match status" value="2"/>
</dbReference>
<dbReference type="Gene3D" id="1.10.3080.10">
    <property type="entry name" value="Clc chloride channel"/>
    <property type="match status" value="1"/>
</dbReference>
<dbReference type="InterPro" id="IPR000644">
    <property type="entry name" value="CBS_dom"/>
</dbReference>
<dbReference type="InterPro" id="IPR046342">
    <property type="entry name" value="CBS_dom_sf"/>
</dbReference>
<dbReference type="InterPro" id="IPR014743">
    <property type="entry name" value="Cl-channel_core"/>
</dbReference>
<dbReference type="InterPro" id="IPR002243">
    <property type="entry name" value="Cl_channel-1"/>
</dbReference>
<dbReference type="InterPro" id="IPR050970">
    <property type="entry name" value="Cl_channel_volt-gated"/>
</dbReference>
<dbReference type="InterPro" id="IPR001807">
    <property type="entry name" value="ClC"/>
</dbReference>
<dbReference type="PANTHER" id="PTHR45720:SF4">
    <property type="entry name" value="CHLORIDE CHANNEL PROTEIN 1"/>
    <property type="match status" value="1"/>
</dbReference>
<dbReference type="PANTHER" id="PTHR45720">
    <property type="entry name" value="CHLORIDE CHANNEL PROTEIN 2"/>
    <property type="match status" value="1"/>
</dbReference>
<dbReference type="Pfam" id="PF00654">
    <property type="entry name" value="Voltage_CLC"/>
    <property type="match status" value="1"/>
</dbReference>
<dbReference type="PRINTS" id="PR00762">
    <property type="entry name" value="CLCHANNEL"/>
</dbReference>
<dbReference type="PRINTS" id="PR01112">
    <property type="entry name" value="CLCHANNEL1"/>
</dbReference>
<dbReference type="SUPFAM" id="SSF54631">
    <property type="entry name" value="CBS-domain pair"/>
    <property type="match status" value="1"/>
</dbReference>
<dbReference type="SUPFAM" id="SSF81340">
    <property type="entry name" value="Clc chloride channel"/>
    <property type="match status" value="1"/>
</dbReference>
<dbReference type="PROSITE" id="PS51371">
    <property type="entry name" value="CBS"/>
    <property type="match status" value="2"/>
</dbReference>
<feature type="chain" id="PRO_0000094430" description="Chloride channel protein 1">
    <location>
        <begin position="1"/>
        <end position="994"/>
    </location>
</feature>
<feature type="topological domain" description="Cytoplasmic" evidence="12">
    <location>
        <begin position="1"/>
        <end position="118"/>
    </location>
</feature>
<feature type="transmembrane region" description="Helical" evidence="2">
    <location>
        <begin position="119"/>
        <end position="150"/>
    </location>
</feature>
<feature type="topological domain" description="Extracellular" evidence="12">
    <location>
        <begin position="151"/>
        <end position="158"/>
    </location>
</feature>
<feature type="transmembrane region" description="Helical" evidence="2">
    <location>
        <begin position="159"/>
        <end position="179"/>
    </location>
</feature>
<feature type="topological domain" description="Cytoplasmic" evidence="12">
    <location>
        <begin position="180"/>
        <end position="183"/>
    </location>
</feature>
<feature type="intramembrane region" description="Note=Loop between two helices" evidence="2">
    <location>
        <begin position="184"/>
        <end position="189"/>
    </location>
</feature>
<feature type="intramembrane region" description="Helical" evidence="2">
    <location>
        <begin position="190"/>
        <end position="195"/>
    </location>
</feature>
<feature type="topological domain" description="Cytoplasmic" evidence="12">
    <location>
        <begin position="196"/>
        <end position="208"/>
    </location>
</feature>
<feature type="intramembrane region" description="Helical" evidence="2">
    <location>
        <begin position="209"/>
        <end position="224"/>
    </location>
</feature>
<feature type="intramembrane region" description="Note=Loop between two helices" evidence="2">
    <location>
        <begin position="225"/>
        <end position="230"/>
    </location>
</feature>
<feature type="intramembrane region" description="Helical" evidence="2">
    <location>
        <begin position="231"/>
        <end position="246"/>
    </location>
</feature>
<feature type="topological domain" description="Cytoplasmic" evidence="12">
    <location>
        <begin position="247"/>
        <end position="268"/>
    </location>
</feature>
<feature type="intramembrane region" description="Helical" evidence="2">
    <location>
        <begin position="269"/>
        <end position="280"/>
    </location>
</feature>
<feature type="intramembrane region" description="Helical" evidence="2">
    <location>
        <begin position="281"/>
        <end position="290"/>
    </location>
</feature>
<feature type="topological domain" description="Cytoplasmic" evidence="12">
    <location>
        <begin position="291"/>
        <end position="301"/>
    </location>
</feature>
<feature type="transmembrane region" description="Helical" evidence="2">
    <location>
        <begin position="302"/>
        <end position="321"/>
    </location>
</feature>
<feature type="topological domain" description="Extracellular" evidence="12">
    <location>
        <begin position="322"/>
        <end position="347"/>
    </location>
</feature>
<feature type="transmembrane region" description="Helical" evidence="2">
    <location>
        <begin position="348"/>
        <end position="376"/>
    </location>
</feature>
<feature type="topological domain" description="Cytoplasmic" evidence="12">
    <location>
        <begin position="377"/>
        <end position="390"/>
    </location>
</feature>
<feature type="transmembrane region" description="Helical" evidence="2">
    <location>
        <begin position="391"/>
        <end position="408"/>
    </location>
</feature>
<feature type="topological domain" description="Extracellular" evidence="12">
    <location>
        <begin position="409"/>
        <end position="414"/>
    </location>
</feature>
<feature type="intramembrane region" description="Note=Loop between two helices" evidence="2">
    <location>
        <begin position="415"/>
        <end position="418"/>
    </location>
</feature>
<feature type="intramembrane region" description="Helical" evidence="2">
    <location>
        <begin position="419"/>
        <end position="426"/>
    </location>
</feature>
<feature type="topological domain" description="Extracellular" evidence="12">
    <location>
        <begin position="427"/>
        <end position="457"/>
    </location>
</feature>
<feature type="intramembrane region" description="Helical" evidence="2">
    <location>
        <begin position="458"/>
        <end position="475"/>
    </location>
</feature>
<feature type="intramembrane region" description="Note=Loop between two helices" evidence="2">
    <location>
        <begin position="476"/>
        <end position="482"/>
    </location>
</feature>
<feature type="intramembrane region" description="Helical" evidence="2">
    <location>
        <begin position="483"/>
        <end position="498"/>
    </location>
</feature>
<feature type="topological domain" description="Extracellular" evidence="12">
    <location>
        <begin position="499"/>
        <end position="521"/>
    </location>
</feature>
<feature type="intramembrane region" description="Helical" evidence="2">
    <location>
        <begin position="522"/>
        <end position="538"/>
    </location>
</feature>
<feature type="intramembrane region" description="Note=Loop between two helices" evidence="2">
    <location>
        <begin position="539"/>
        <end position="540"/>
    </location>
</feature>
<feature type="intramembrane region" description="Helical" evidence="2">
    <location>
        <begin position="541"/>
        <end position="554"/>
    </location>
</feature>
<feature type="topological domain" description="Extracellular" evidence="12">
    <location>
        <begin position="555"/>
        <end position="557"/>
    </location>
</feature>
<feature type="intramembrane region" description="Helical" evidence="2">
    <location>
        <begin position="558"/>
        <end position="571"/>
    </location>
</feature>
<feature type="intramembrane region" description="Note=Loop between two helices" evidence="2">
    <location>
        <begin position="572"/>
        <end position="575"/>
    </location>
</feature>
<feature type="intramembrane region" description="Helical" evidence="2">
    <location>
        <begin position="576"/>
        <end position="578"/>
    </location>
</feature>
<feature type="topological domain" description="Cytoplasmic" evidence="12">
    <location>
        <begin position="579"/>
        <end position="994"/>
    </location>
</feature>
<feature type="domain" description="CBS 1" evidence="5">
    <location>
        <begin position="609"/>
        <end position="668"/>
    </location>
</feature>
<feature type="domain" description="CBS 2" evidence="5">
    <location>
        <begin position="827"/>
        <end position="882"/>
    </location>
</feature>
<feature type="region of interest" description="Disordered" evidence="6">
    <location>
        <begin position="710"/>
        <end position="770"/>
    </location>
</feature>
<feature type="region of interest" description="Disordered" evidence="6">
    <location>
        <begin position="886"/>
        <end position="954"/>
    </location>
</feature>
<feature type="region of interest" description="Disordered" evidence="6">
    <location>
        <begin position="971"/>
        <end position="994"/>
    </location>
</feature>
<feature type="short sequence motif" description="Selectivity filter part_1" evidence="1">
    <location>
        <begin position="188"/>
        <end position="192"/>
    </location>
</feature>
<feature type="short sequence motif" description="Selectivity filter part_2" evidence="1">
    <location>
        <begin position="230"/>
        <end position="234"/>
    </location>
</feature>
<feature type="short sequence motif" description="Selectivity filter part_3" evidence="1">
    <location>
        <begin position="482"/>
        <end position="486"/>
    </location>
</feature>
<feature type="compositionally biased region" description="Pro residues" evidence="6">
    <location>
        <begin position="725"/>
        <end position="739"/>
    </location>
</feature>
<feature type="compositionally biased region" description="Pro residues" evidence="6">
    <location>
        <begin position="933"/>
        <end position="943"/>
    </location>
</feature>
<feature type="compositionally biased region" description="Acidic residues" evidence="6">
    <location>
        <begin position="985"/>
        <end position="994"/>
    </location>
</feature>
<feature type="binding site" evidence="3">
    <location>
        <position position="189"/>
    </location>
    <ligand>
        <name>chloride</name>
        <dbReference type="ChEBI" id="CHEBI:17996"/>
    </ligand>
</feature>
<feature type="binding site" evidence="3">
    <location>
        <position position="484"/>
    </location>
    <ligand>
        <name>chloride</name>
        <dbReference type="ChEBI" id="CHEBI:17996"/>
    </ligand>
</feature>
<feature type="binding site" evidence="3">
    <location>
        <position position="578"/>
    </location>
    <ligand>
        <name>chloride</name>
        <dbReference type="ChEBI" id="CHEBI:17996"/>
    </ligand>
</feature>
<feature type="site" description="Protopore gate" evidence="2">
    <location>
        <position position="232"/>
    </location>
</feature>
<feature type="modified residue" description="Phosphoserine" evidence="14">
    <location>
        <position position="892"/>
    </location>
</feature>
<feature type="mutagenesis site" description="Causes myotonia." evidence="11">
    <original>I</original>
    <variation>T</variation>
    <location>
        <position position="553"/>
    </location>
</feature>
<feature type="sequence conflict" description="In Ref. 1; CAB08359." evidence="12" ref="1">
    <original>Q</original>
    <variation>H</variation>
    <location>
        <position position="65"/>
    </location>
</feature>
<feature type="sequence conflict" description="In Ref. 1; CAB08359." evidence="12" ref="1">
    <original>K</original>
    <variation>Q</variation>
    <location>
        <position position="72"/>
    </location>
</feature>
<feature type="sequence conflict" description="In Ref. 1; CAB08359." evidence="12" ref="1">
    <original>GGM</original>
    <variation>RGI</variation>
    <location>
        <begin position="76"/>
        <end position="78"/>
    </location>
</feature>
<feature type="sequence conflict" description="In Ref. 1; CAB08359." evidence="12" ref="1">
    <original>MG</original>
    <variation>TD</variation>
    <location>
        <begin position="82"/>
        <end position="83"/>
    </location>
</feature>
<feature type="sequence conflict" description="In Ref. 1; CAB08359." evidence="12" ref="1">
    <original>M</original>
    <variation>V</variation>
    <location>
        <position position="88"/>
    </location>
</feature>
<feature type="sequence conflict" description="In Ref. 1; CAB08359." evidence="12" ref="1">
    <original>A</original>
    <variation>T</variation>
    <location>
        <position position="243"/>
    </location>
</feature>
<feature type="sequence conflict" description="In Ref. 1; CAB08359." evidence="12" ref="1">
    <original>GF</original>
    <variation>VN</variation>
    <location>
        <begin position="483"/>
        <end position="484"/>
    </location>
</feature>
<feature type="sequence conflict" description="In Ref. 1; CAB08359." evidence="12" ref="1">
    <original>K</original>
    <variation>E</variation>
    <location>
        <position position="585"/>
    </location>
</feature>
<feature type="sequence conflict" description="In Ref. 1; CAB08359." evidence="12" ref="1">
    <original>C</original>
    <variation>S</variation>
    <location>
        <position position="620"/>
    </location>
</feature>
<feature type="sequence conflict" description="In Ref. 1; CAB08359." evidence="12" ref="1">
    <original>A</original>
    <variation>T</variation>
    <location>
        <position position="631"/>
    </location>
</feature>
<feature type="sequence conflict" description="In Ref. 6; no nucleotide entry." evidence="12" ref="6">
    <original>N</original>
    <variation>H</variation>
    <location>
        <position position="746"/>
    </location>
</feature>
<feature type="sequence conflict" description="In Ref. 1; CAB08359." evidence="12" ref="1">
    <original>R</original>
    <variation>T</variation>
    <location>
        <position position="864"/>
    </location>
</feature>
<feature type="sequence conflict" description="In Ref. 1; CAB08359." evidence="12" ref="1">
    <original>E</original>
    <variation>K</variation>
    <location>
        <position position="877"/>
    </location>
</feature>
<feature type="sequence conflict" description="In Ref. 1; CAB08359." evidence="12" ref="1">
    <original>G</original>
    <variation>S</variation>
    <location>
        <position position="912"/>
    </location>
</feature>
<feature type="sequence conflict" description="In Ref. 1; CAB08359." evidence="12" ref="1">
    <original>DG</original>
    <variation>GE</variation>
    <location>
        <begin position="918"/>
        <end position="919"/>
    </location>
</feature>
<feature type="sequence conflict" description="In Ref. 1; CAB08359." evidence="12" ref="1">
    <original>G</original>
    <variation>E</variation>
    <location>
        <position position="924"/>
    </location>
</feature>
<feature type="sequence conflict" description="In Ref. 6; no nucleotide entry." evidence="12" ref="6">
    <original>A</original>
    <variation>V</variation>
    <location>
        <position position="944"/>
    </location>
</feature>